<accession>Q5GW34</accession>
<name>RSMH_XANOR</name>
<feature type="chain" id="PRO_0000108753" description="Ribosomal RNA small subunit methyltransferase H">
    <location>
        <begin position="1"/>
        <end position="337"/>
    </location>
</feature>
<feature type="region of interest" description="Disordered" evidence="2">
    <location>
        <begin position="317"/>
        <end position="337"/>
    </location>
</feature>
<feature type="binding site" evidence="1">
    <location>
        <begin position="36"/>
        <end position="38"/>
    </location>
    <ligand>
        <name>S-adenosyl-L-methionine</name>
        <dbReference type="ChEBI" id="CHEBI:59789"/>
    </ligand>
</feature>
<feature type="binding site" evidence="1">
    <location>
        <position position="56"/>
    </location>
    <ligand>
        <name>S-adenosyl-L-methionine</name>
        <dbReference type="ChEBI" id="CHEBI:59789"/>
    </ligand>
</feature>
<feature type="binding site" evidence="1">
    <location>
        <position position="82"/>
    </location>
    <ligand>
        <name>S-adenosyl-L-methionine</name>
        <dbReference type="ChEBI" id="CHEBI:59789"/>
    </ligand>
</feature>
<feature type="binding site" evidence="1">
    <location>
        <position position="100"/>
    </location>
    <ligand>
        <name>S-adenosyl-L-methionine</name>
        <dbReference type="ChEBI" id="CHEBI:59789"/>
    </ligand>
</feature>
<feature type="binding site" evidence="1">
    <location>
        <position position="107"/>
    </location>
    <ligand>
        <name>S-adenosyl-L-methionine</name>
        <dbReference type="ChEBI" id="CHEBI:59789"/>
    </ligand>
</feature>
<sequence length="337" mass="36266">MSQPPAAHVPVLYTQVLDGLQVTENGTYLDGTFGRGGHARGVLEHLGPGGRLLVMDKDPEAIAVAEQTFGGDARVSIHRGSFAGLGQVVAAATVDGILLDLGVSSPQLEVAGRGFSFGKDGPLDMRMDPDSGQSAAQWLAQATDREIADVLWTYGEERQSRRIARAIVARRAEQPLLRTAQLADLIASVMPRGDSKTHPATRSFQAIRIYINRELDDLETGLDAALAALKPGGRLAVISFHSLEDRIVKQFMARYAKAPPSNRRLPEAQPFVPTLQLVSGAIKADDAELNVNPRARSAVLRVAEKLELRIGDSLLERRSGRIPNPQSPIPASQGDAR</sequence>
<organism>
    <name type="scientific">Xanthomonas oryzae pv. oryzae (strain KACC10331 / KXO85)</name>
    <dbReference type="NCBI Taxonomy" id="291331"/>
    <lineage>
        <taxon>Bacteria</taxon>
        <taxon>Pseudomonadati</taxon>
        <taxon>Pseudomonadota</taxon>
        <taxon>Gammaproteobacteria</taxon>
        <taxon>Lysobacterales</taxon>
        <taxon>Lysobacteraceae</taxon>
        <taxon>Xanthomonas</taxon>
    </lineage>
</organism>
<evidence type="ECO:0000255" key="1">
    <source>
        <dbReference type="HAMAP-Rule" id="MF_01007"/>
    </source>
</evidence>
<evidence type="ECO:0000256" key="2">
    <source>
        <dbReference type="SAM" id="MobiDB-lite"/>
    </source>
</evidence>
<evidence type="ECO:0000305" key="3"/>
<proteinExistence type="inferred from homology"/>
<keyword id="KW-0963">Cytoplasm</keyword>
<keyword id="KW-0489">Methyltransferase</keyword>
<keyword id="KW-1185">Reference proteome</keyword>
<keyword id="KW-0698">rRNA processing</keyword>
<keyword id="KW-0949">S-adenosyl-L-methionine</keyword>
<keyword id="KW-0808">Transferase</keyword>
<gene>
    <name evidence="1" type="primary">rsmH</name>
    <name type="synonym">mraW</name>
    <name type="ordered locus">XOO3833</name>
</gene>
<protein>
    <recommendedName>
        <fullName evidence="1">Ribosomal RNA small subunit methyltransferase H</fullName>
        <ecNumber evidence="1">2.1.1.199</ecNumber>
    </recommendedName>
    <alternativeName>
        <fullName evidence="1">16S rRNA m(4)C1402 methyltransferase</fullName>
    </alternativeName>
    <alternativeName>
        <fullName evidence="1">rRNA (cytosine-N(4)-)-methyltransferase RsmH</fullName>
    </alternativeName>
</protein>
<reference key="1">
    <citation type="journal article" date="2005" name="Nucleic Acids Res.">
        <title>The genome sequence of Xanthomonas oryzae pathovar oryzae KACC10331, the bacterial blight pathogen of rice.</title>
        <authorList>
            <person name="Lee B.-M."/>
            <person name="Park Y.-J."/>
            <person name="Park D.-S."/>
            <person name="Kang H.-W."/>
            <person name="Kim J.-G."/>
            <person name="Song E.-S."/>
            <person name="Park I.-C."/>
            <person name="Yoon U.-H."/>
            <person name="Hahn J.-H."/>
            <person name="Koo B.-S."/>
            <person name="Lee G.-B."/>
            <person name="Kim H."/>
            <person name="Park H.-S."/>
            <person name="Yoon K.-O."/>
            <person name="Kim J.-H."/>
            <person name="Jung C.-H."/>
            <person name="Koh N.-H."/>
            <person name="Seo J.-S."/>
            <person name="Go S.-J."/>
        </authorList>
    </citation>
    <scope>NUCLEOTIDE SEQUENCE [LARGE SCALE GENOMIC DNA]</scope>
    <source>
        <strain>KACC10331 / KXO85</strain>
    </source>
</reference>
<comment type="function">
    <text evidence="1">Specifically methylates the N4 position of cytidine in position 1402 (C1402) of 16S rRNA.</text>
</comment>
<comment type="catalytic activity">
    <reaction evidence="1">
        <text>cytidine(1402) in 16S rRNA + S-adenosyl-L-methionine = N(4)-methylcytidine(1402) in 16S rRNA + S-adenosyl-L-homocysteine + H(+)</text>
        <dbReference type="Rhea" id="RHEA:42928"/>
        <dbReference type="Rhea" id="RHEA-COMP:10286"/>
        <dbReference type="Rhea" id="RHEA-COMP:10287"/>
        <dbReference type="ChEBI" id="CHEBI:15378"/>
        <dbReference type="ChEBI" id="CHEBI:57856"/>
        <dbReference type="ChEBI" id="CHEBI:59789"/>
        <dbReference type="ChEBI" id="CHEBI:74506"/>
        <dbReference type="ChEBI" id="CHEBI:82748"/>
        <dbReference type="EC" id="2.1.1.199"/>
    </reaction>
</comment>
<comment type="subcellular location">
    <subcellularLocation>
        <location evidence="1">Cytoplasm</location>
    </subcellularLocation>
</comment>
<comment type="similarity">
    <text evidence="1">Belongs to the methyltransferase superfamily. RsmH family.</text>
</comment>
<comment type="sequence caution" evidence="3">
    <conflict type="erroneous initiation">
        <sequence resource="EMBL-CDS" id="AAW77087"/>
    </conflict>
</comment>
<dbReference type="EC" id="2.1.1.199" evidence="1"/>
<dbReference type="EMBL" id="AE013598">
    <property type="protein sequence ID" value="AAW77087.1"/>
    <property type="status" value="ALT_INIT"/>
    <property type="molecule type" value="Genomic_DNA"/>
</dbReference>
<dbReference type="SMR" id="Q5GW34"/>
<dbReference type="STRING" id="291331.XOO3833"/>
<dbReference type="KEGG" id="xoo:XOO3833"/>
<dbReference type="HOGENOM" id="CLU_038422_1_1_6"/>
<dbReference type="Proteomes" id="UP000006735">
    <property type="component" value="Chromosome"/>
</dbReference>
<dbReference type="GO" id="GO:0005737">
    <property type="term" value="C:cytoplasm"/>
    <property type="evidence" value="ECO:0007669"/>
    <property type="project" value="UniProtKB-SubCell"/>
</dbReference>
<dbReference type="GO" id="GO:0071424">
    <property type="term" value="F:rRNA (cytosine-N4-)-methyltransferase activity"/>
    <property type="evidence" value="ECO:0007669"/>
    <property type="project" value="UniProtKB-UniRule"/>
</dbReference>
<dbReference type="GO" id="GO:0070475">
    <property type="term" value="P:rRNA base methylation"/>
    <property type="evidence" value="ECO:0007669"/>
    <property type="project" value="UniProtKB-UniRule"/>
</dbReference>
<dbReference type="FunFam" id="1.10.150.170:FF:000001">
    <property type="entry name" value="Ribosomal RNA small subunit methyltransferase H"/>
    <property type="match status" value="1"/>
</dbReference>
<dbReference type="Gene3D" id="1.10.150.170">
    <property type="entry name" value="Putative methyltransferase TM0872, insert domain"/>
    <property type="match status" value="1"/>
</dbReference>
<dbReference type="Gene3D" id="3.40.50.150">
    <property type="entry name" value="Vaccinia Virus protein VP39"/>
    <property type="match status" value="1"/>
</dbReference>
<dbReference type="HAMAP" id="MF_01007">
    <property type="entry name" value="16SrRNA_methyltr_H"/>
    <property type="match status" value="1"/>
</dbReference>
<dbReference type="InterPro" id="IPR002903">
    <property type="entry name" value="RsmH"/>
</dbReference>
<dbReference type="InterPro" id="IPR023397">
    <property type="entry name" value="SAM-dep_MeTrfase_MraW_recog"/>
</dbReference>
<dbReference type="InterPro" id="IPR029063">
    <property type="entry name" value="SAM-dependent_MTases_sf"/>
</dbReference>
<dbReference type="NCBIfam" id="TIGR00006">
    <property type="entry name" value="16S rRNA (cytosine(1402)-N(4))-methyltransferase RsmH"/>
    <property type="match status" value="1"/>
</dbReference>
<dbReference type="PANTHER" id="PTHR11265:SF0">
    <property type="entry name" value="12S RRNA N4-METHYLCYTIDINE METHYLTRANSFERASE"/>
    <property type="match status" value="1"/>
</dbReference>
<dbReference type="PANTHER" id="PTHR11265">
    <property type="entry name" value="S-ADENOSYL-METHYLTRANSFERASE MRAW"/>
    <property type="match status" value="1"/>
</dbReference>
<dbReference type="Pfam" id="PF01795">
    <property type="entry name" value="Methyltransf_5"/>
    <property type="match status" value="1"/>
</dbReference>
<dbReference type="PIRSF" id="PIRSF004486">
    <property type="entry name" value="MraW"/>
    <property type="match status" value="1"/>
</dbReference>
<dbReference type="SUPFAM" id="SSF81799">
    <property type="entry name" value="Putative methyltransferase TM0872, insert domain"/>
    <property type="match status" value="1"/>
</dbReference>
<dbReference type="SUPFAM" id="SSF53335">
    <property type="entry name" value="S-adenosyl-L-methionine-dependent methyltransferases"/>
    <property type="match status" value="1"/>
</dbReference>